<proteinExistence type="inferred from homology"/>
<reference key="1">
    <citation type="journal article" date="2005" name="J. Bacteriol.">
        <title>The genome of Sulfolobus acidocaldarius, a model organism of the Crenarchaeota.</title>
        <authorList>
            <person name="Chen L."/>
            <person name="Bruegger K."/>
            <person name="Skovgaard M."/>
            <person name="Redder P."/>
            <person name="She Q."/>
            <person name="Torarinsson E."/>
            <person name="Greve B."/>
            <person name="Awayez M."/>
            <person name="Zibat A."/>
            <person name="Klenk H.-P."/>
            <person name="Garrett R.A."/>
        </authorList>
    </citation>
    <scope>NUCLEOTIDE SEQUENCE [LARGE SCALE GENOMIC DNA]</scope>
    <source>
        <strain>ATCC 33909 / DSM 639 / JCM 8929 / NBRC 15157 / NCIMB 11770</strain>
    </source>
</reference>
<keyword id="KW-0274">FAD</keyword>
<keyword id="KW-0285">Flavoprotein</keyword>
<keyword id="KW-0521">NADP</keyword>
<keyword id="KW-0560">Oxidoreductase</keyword>
<keyword id="KW-1185">Reference proteome</keyword>
<organism>
    <name type="scientific">Sulfolobus acidocaldarius (strain ATCC 33909 / DSM 639 / JCM 8929 / NBRC 15157 / NCIMB 11770)</name>
    <dbReference type="NCBI Taxonomy" id="330779"/>
    <lineage>
        <taxon>Archaea</taxon>
        <taxon>Thermoproteota</taxon>
        <taxon>Thermoprotei</taxon>
        <taxon>Sulfolobales</taxon>
        <taxon>Sulfolobaceae</taxon>
        <taxon>Sulfolobus</taxon>
    </lineage>
</organism>
<sequence length="328" mass="36060">MVIIGGGPIGLYATFYAGLRDMRALVIDAQDELGGQLVTLYPEKVVYDVGGYPGILAYDLAQNLIEQAKMFSPDIRINEWADMIERTPDNMWIIKTDKGGAFKTKTILIAAGIGKIIPSRLNAKGEIEYENKGVYYTVRRKRDFEGKRILIVGGGDSAVDWALTLSPVAKSVTLIHRRDQFRAHERSVKQMFQVATVYTWHELKEVKGDGSKVTQAVIFDNRTKEEKTLDVDAVIISIGHKGDLGNMVKWGLNMKGRSITVNGKMETNLAGVYAAGDIVEQEGTPKLALIATGFAQAAIAVSVAKKYIDPNASVFAGHSSEMDNKFKK</sequence>
<protein>
    <recommendedName>
        <fullName evidence="1">Ferredoxin--NADP reductase 1</fullName>
        <shortName evidence="1">FNR 1</shortName>
        <shortName evidence="1">Fd-NADP(+) reductase 1</shortName>
        <ecNumber evidence="1">1.18.1.2</ecNumber>
    </recommendedName>
</protein>
<comment type="catalytic activity">
    <reaction evidence="1">
        <text>2 reduced [2Fe-2S]-[ferredoxin] + NADP(+) + H(+) = 2 oxidized [2Fe-2S]-[ferredoxin] + NADPH</text>
        <dbReference type="Rhea" id="RHEA:20125"/>
        <dbReference type="Rhea" id="RHEA-COMP:10000"/>
        <dbReference type="Rhea" id="RHEA-COMP:10001"/>
        <dbReference type="ChEBI" id="CHEBI:15378"/>
        <dbReference type="ChEBI" id="CHEBI:33737"/>
        <dbReference type="ChEBI" id="CHEBI:33738"/>
        <dbReference type="ChEBI" id="CHEBI:57783"/>
        <dbReference type="ChEBI" id="CHEBI:58349"/>
        <dbReference type="EC" id="1.18.1.2"/>
    </reaction>
</comment>
<comment type="cofactor">
    <cofactor evidence="1">
        <name>FAD</name>
        <dbReference type="ChEBI" id="CHEBI:57692"/>
    </cofactor>
    <text evidence="1">Binds 1 FAD per subunit.</text>
</comment>
<comment type="subunit">
    <text evidence="1">Homodimer.</text>
</comment>
<comment type="similarity">
    <text evidence="1">Belongs to the ferredoxin--NADP reductase type 2 family.</text>
</comment>
<feature type="chain" id="PRO_0000364989" description="Ferredoxin--NADP reductase 1">
    <location>
        <begin position="1"/>
        <end position="328"/>
    </location>
</feature>
<feature type="binding site" evidence="1">
    <location>
        <position position="28"/>
    </location>
    <ligand>
        <name>FAD</name>
        <dbReference type="ChEBI" id="CHEBI:57692"/>
    </ligand>
</feature>
<feature type="binding site" evidence="1">
    <location>
        <position position="36"/>
    </location>
    <ligand>
        <name>FAD</name>
        <dbReference type="ChEBI" id="CHEBI:57692"/>
    </ligand>
</feature>
<feature type="binding site" evidence="1">
    <location>
        <position position="41"/>
    </location>
    <ligand>
        <name>FAD</name>
        <dbReference type="ChEBI" id="CHEBI:57692"/>
    </ligand>
</feature>
<feature type="binding site" evidence="1">
    <location>
        <position position="81"/>
    </location>
    <ligand>
        <name>FAD</name>
        <dbReference type="ChEBI" id="CHEBI:57692"/>
    </ligand>
</feature>
<feature type="binding site" evidence="1">
    <location>
        <position position="116"/>
    </location>
    <ligand>
        <name>FAD</name>
        <dbReference type="ChEBI" id="CHEBI:57692"/>
    </ligand>
</feature>
<feature type="binding site" evidence="1">
    <location>
        <position position="277"/>
    </location>
    <ligand>
        <name>FAD</name>
        <dbReference type="ChEBI" id="CHEBI:57692"/>
    </ligand>
</feature>
<feature type="binding site" evidence="1">
    <location>
        <position position="320"/>
    </location>
    <ligand>
        <name>FAD</name>
        <dbReference type="ChEBI" id="CHEBI:57692"/>
    </ligand>
</feature>
<name>FENR1_SULAC</name>
<dbReference type="EC" id="1.18.1.2" evidence="1"/>
<dbReference type="EMBL" id="CP000077">
    <property type="protein sequence ID" value="AAY79459.1"/>
    <property type="molecule type" value="Genomic_DNA"/>
</dbReference>
<dbReference type="SMR" id="Q4JCM0"/>
<dbReference type="STRING" id="330779.Saci_0029"/>
<dbReference type="KEGG" id="sai:Saci_0029"/>
<dbReference type="PATRIC" id="fig|330779.12.peg.28"/>
<dbReference type="eggNOG" id="arCOG01296">
    <property type="taxonomic scope" value="Archaea"/>
</dbReference>
<dbReference type="HOGENOM" id="CLU_031864_5_5_2"/>
<dbReference type="Proteomes" id="UP000001018">
    <property type="component" value="Chromosome"/>
</dbReference>
<dbReference type="GO" id="GO:0004324">
    <property type="term" value="F:ferredoxin-NADP+ reductase activity"/>
    <property type="evidence" value="ECO:0007669"/>
    <property type="project" value="UniProtKB-UniRule"/>
</dbReference>
<dbReference type="GO" id="GO:0050660">
    <property type="term" value="F:flavin adenine dinucleotide binding"/>
    <property type="evidence" value="ECO:0007669"/>
    <property type="project" value="UniProtKB-UniRule"/>
</dbReference>
<dbReference type="GO" id="GO:0050661">
    <property type="term" value="F:NADP binding"/>
    <property type="evidence" value="ECO:0007669"/>
    <property type="project" value="UniProtKB-UniRule"/>
</dbReference>
<dbReference type="Gene3D" id="3.50.50.60">
    <property type="entry name" value="FAD/NAD(P)-binding domain"/>
    <property type="match status" value="2"/>
</dbReference>
<dbReference type="HAMAP" id="MF_01685">
    <property type="entry name" value="FENR2"/>
    <property type="match status" value="1"/>
</dbReference>
<dbReference type="InterPro" id="IPR036188">
    <property type="entry name" value="FAD/NAD-bd_sf"/>
</dbReference>
<dbReference type="InterPro" id="IPR023753">
    <property type="entry name" value="FAD/NAD-binding_dom"/>
</dbReference>
<dbReference type="InterPro" id="IPR022890">
    <property type="entry name" value="Fd--NADP_Rdtase_type_2"/>
</dbReference>
<dbReference type="InterPro" id="IPR050097">
    <property type="entry name" value="Ferredoxin-NADP_redctase_2"/>
</dbReference>
<dbReference type="PANTHER" id="PTHR48105">
    <property type="entry name" value="THIOREDOXIN REDUCTASE 1-RELATED-RELATED"/>
    <property type="match status" value="1"/>
</dbReference>
<dbReference type="Pfam" id="PF07992">
    <property type="entry name" value="Pyr_redox_2"/>
    <property type="match status" value="1"/>
</dbReference>
<dbReference type="PRINTS" id="PR00368">
    <property type="entry name" value="FADPNR"/>
</dbReference>
<dbReference type="PRINTS" id="PR00469">
    <property type="entry name" value="PNDRDTASEII"/>
</dbReference>
<dbReference type="SUPFAM" id="SSF51905">
    <property type="entry name" value="FAD/NAD(P)-binding domain"/>
    <property type="match status" value="1"/>
</dbReference>
<gene>
    <name type="ordered locus">Saci_0029</name>
</gene>
<evidence type="ECO:0000255" key="1">
    <source>
        <dbReference type="HAMAP-Rule" id="MF_01685"/>
    </source>
</evidence>
<accession>Q4JCM0</accession>